<comment type="function">
    <text evidence="1">Component of the acetyl coenzyme A carboxylase (ACC) complex. First, biotin carboxylase catalyzes the carboxylation of biotin on its carrier protein (BCCP) and then the CO(2) group is transferred by the carboxyltransferase to acetyl-CoA to form malonyl-CoA.</text>
</comment>
<comment type="catalytic activity">
    <reaction evidence="1">
        <text>N(6)-carboxybiotinyl-L-lysyl-[protein] + acetyl-CoA = N(6)-biotinyl-L-lysyl-[protein] + malonyl-CoA</text>
        <dbReference type="Rhea" id="RHEA:54728"/>
        <dbReference type="Rhea" id="RHEA-COMP:10505"/>
        <dbReference type="Rhea" id="RHEA-COMP:10506"/>
        <dbReference type="ChEBI" id="CHEBI:57288"/>
        <dbReference type="ChEBI" id="CHEBI:57384"/>
        <dbReference type="ChEBI" id="CHEBI:83144"/>
        <dbReference type="ChEBI" id="CHEBI:83145"/>
        <dbReference type="EC" id="2.1.3.15"/>
    </reaction>
</comment>
<comment type="pathway">
    <text evidence="1">Lipid metabolism; malonyl-CoA biosynthesis; malonyl-CoA from acetyl-CoA: step 1/1.</text>
</comment>
<comment type="subunit">
    <text evidence="1">Acetyl-CoA carboxylase is a heterohexamer composed of biotin carboxyl carrier protein (AccB), biotin carboxylase (AccC) and two subunits each of ACCase subunit alpha (AccA) and ACCase subunit beta (AccD).</text>
</comment>
<comment type="subcellular location">
    <subcellularLocation>
        <location evidence="1">Cytoplasm</location>
    </subcellularLocation>
</comment>
<comment type="similarity">
    <text evidence="1">Belongs to the AccA family.</text>
</comment>
<feature type="chain" id="PRO_1000134477" description="Acetyl-coenzyme A carboxylase carboxyl transferase subunit alpha">
    <location>
        <begin position="1"/>
        <end position="316"/>
    </location>
</feature>
<feature type="domain" description="CoA carboxyltransferase C-terminal" evidence="2">
    <location>
        <begin position="39"/>
        <end position="293"/>
    </location>
</feature>
<sequence length="316" mass="35377">MNLDYLDFEQPIAELQAKIDELRRVGTSQEINLTEEVNKLEEKNAQLTRQIFSNLTAQQIVQLARHPLRPYTLDYIQRIFTDFNELHGDRHYSQASAIIGGLARLNGEPVMVIGHQKGRTTQEKIYRNFGMARPEGFRKALRLMKLAERFSIPVITLIDTPGAYPGIGAEERNQSEAIARNLFEMAQLKIPIICTIIGEGCSGGALAIGVGDRTLMLQYAYYSVISPEGCASILWKSAEKAGEAAEALGLTANRLHELGLIDEIIKEPLGGAHRDTDAMAEKLKKHLQANLTNLQAKSANDLLEERYRRWLSYGKD</sequence>
<organism>
    <name type="scientific">Coxiella burnetii (strain CbuK_Q154)</name>
    <name type="common">Coxiella burnetii (strain Q154)</name>
    <dbReference type="NCBI Taxonomy" id="434924"/>
    <lineage>
        <taxon>Bacteria</taxon>
        <taxon>Pseudomonadati</taxon>
        <taxon>Pseudomonadota</taxon>
        <taxon>Gammaproteobacteria</taxon>
        <taxon>Legionellales</taxon>
        <taxon>Coxiellaceae</taxon>
        <taxon>Coxiella</taxon>
    </lineage>
</organism>
<reference key="1">
    <citation type="journal article" date="2009" name="Infect. Immun.">
        <title>Comparative genomics reveal extensive transposon-mediated genomic plasticity and diversity among potential effector proteins within the genus Coxiella.</title>
        <authorList>
            <person name="Beare P.A."/>
            <person name="Unsworth N."/>
            <person name="Andoh M."/>
            <person name="Voth D.E."/>
            <person name="Omsland A."/>
            <person name="Gilk S.D."/>
            <person name="Williams K.P."/>
            <person name="Sobral B.W."/>
            <person name="Kupko J.J. III"/>
            <person name="Porcella S.F."/>
            <person name="Samuel J.E."/>
            <person name="Heinzen R.A."/>
        </authorList>
    </citation>
    <scope>NUCLEOTIDE SEQUENCE [LARGE SCALE GENOMIC DNA]</scope>
    <source>
        <strain>CbuK_Q154</strain>
    </source>
</reference>
<dbReference type="EC" id="2.1.3.15" evidence="1"/>
<dbReference type="EMBL" id="CP001020">
    <property type="protein sequence ID" value="ACJ20870.1"/>
    <property type="molecule type" value="Genomic_DNA"/>
</dbReference>
<dbReference type="RefSeq" id="WP_005772042.1">
    <property type="nucleotide sequence ID" value="NC_011528.1"/>
</dbReference>
<dbReference type="SMR" id="B6J4K5"/>
<dbReference type="KEGG" id="cbc:CbuK_1738"/>
<dbReference type="HOGENOM" id="CLU_015486_0_2_6"/>
<dbReference type="UniPathway" id="UPA00655">
    <property type="reaction ID" value="UER00711"/>
</dbReference>
<dbReference type="GO" id="GO:0009317">
    <property type="term" value="C:acetyl-CoA carboxylase complex"/>
    <property type="evidence" value="ECO:0007669"/>
    <property type="project" value="InterPro"/>
</dbReference>
<dbReference type="GO" id="GO:0003989">
    <property type="term" value="F:acetyl-CoA carboxylase activity"/>
    <property type="evidence" value="ECO:0007669"/>
    <property type="project" value="InterPro"/>
</dbReference>
<dbReference type="GO" id="GO:0005524">
    <property type="term" value="F:ATP binding"/>
    <property type="evidence" value="ECO:0007669"/>
    <property type="project" value="UniProtKB-KW"/>
</dbReference>
<dbReference type="GO" id="GO:0016743">
    <property type="term" value="F:carboxyl- or carbamoyltransferase activity"/>
    <property type="evidence" value="ECO:0007669"/>
    <property type="project" value="UniProtKB-UniRule"/>
</dbReference>
<dbReference type="GO" id="GO:0006633">
    <property type="term" value="P:fatty acid biosynthetic process"/>
    <property type="evidence" value="ECO:0007669"/>
    <property type="project" value="UniProtKB-KW"/>
</dbReference>
<dbReference type="GO" id="GO:2001295">
    <property type="term" value="P:malonyl-CoA biosynthetic process"/>
    <property type="evidence" value="ECO:0007669"/>
    <property type="project" value="UniProtKB-UniRule"/>
</dbReference>
<dbReference type="Gene3D" id="3.90.226.10">
    <property type="entry name" value="2-enoyl-CoA Hydratase, Chain A, domain 1"/>
    <property type="match status" value="1"/>
</dbReference>
<dbReference type="HAMAP" id="MF_00823">
    <property type="entry name" value="AcetylCoA_CT_alpha"/>
    <property type="match status" value="1"/>
</dbReference>
<dbReference type="InterPro" id="IPR001095">
    <property type="entry name" value="Acetyl_CoA_COase_a_su"/>
</dbReference>
<dbReference type="InterPro" id="IPR029045">
    <property type="entry name" value="ClpP/crotonase-like_dom_sf"/>
</dbReference>
<dbReference type="InterPro" id="IPR011763">
    <property type="entry name" value="COA_CT_C"/>
</dbReference>
<dbReference type="NCBIfam" id="TIGR00513">
    <property type="entry name" value="accA"/>
    <property type="match status" value="1"/>
</dbReference>
<dbReference type="NCBIfam" id="NF041504">
    <property type="entry name" value="AccA_sub"/>
    <property type="match status" value="1"/>
</dbReference>
<dbReference type="NCBIfam" id="NF004344">
    <property type="entry name" value="PRK05724.1"/>
    <property type="match status" value="1"/>
</dbReference>
<dbReference type="PANTHER" id="PTHR42853">
    <property type="entry name" value="ACETYL-COENZYME A CARBOXYLASE CARBOXYL TRANSFERASE SUBUNIT ALPHA"/>
    <property type="match status" value="1"/>
</dbReference>
<dbReference type="PANTHER" id="PTHR42853:SF3">
    <property type="entry name" value="ACETYL-COENZYME A CARBOXYLASE CARBOXYL TRANSFERASE SUBUNIT ALPHA, CHLOROPLASTIC"/>
    <property type="match status" value="1"/>
</dbReference>
<dbReference type="Pfam" id="PF03255">
    <property type="entry name" value="ACCA"/>
    <property type="match status" value="1"/>
</dbReference>
<dbReference type="PRINTS" id="PR01069">
    <property type="entry name" value="ACCCTRFRASEA"/>
</dbReference>
<dbReference type="SUPFAM" id="SSF52096">
    <property type="entry name" value="ClpP/crotonase"/>
    <property type="match status" value="1"/>
</dbReference>
<dbReference type="PROSITE" id="PS50989">
    <property type="entry name" value="COA_CT_CTER"/>
    <property type="match status" value="1"/>
</dbReference>
<accession>B6J4K5</accession>
<keyword id="KW-0067">ATP-binding</keyword>
<keyword id="KW-0963">Cytoplasm</keyword>
<keyword id="KW-0275">Fatty acid biosynthesis</keyword>
<keyword id="KW-0276">Fatty acid metabolism</keyword>
<keyword id="KW-0444">Lipid biosynthesis</keyword>
<keyword id="KW-0443">Lipid metabolism</keyword>
<keyword id="KW-0547">Nucleotide-binding</keyword>
<keyword id="KW-0808">Transferase</keyword>
<proteinExistence type="inferred from homology"/>
<evidence type="ECO:0000255" key="1">
    <source>
        <dbReference type="HAMAP-Rule" id="MF_00823"/>
    </source>
</evidence>
<evidence type="ECO:0000255" key="2">
    <source>
        <dbReference type="PROSITE-ProRule" id="PRU01137"/>
    </source>
</evidence>
<gene>
    <name evidence="1" type="primary">accA</name>
    <name type="ordered locus">CbuK_1738</name>
</gene>
<protein>
    <recommendedName>
        <fullName evidence="1">Acetyl-coenzyme A carboxylase carboxyl transferase subunit alpha</fullName>
        <shortName evidence="1">ACCase subunit alpha</shortName>
        <shortName evidence="1">Acetyl-CoA carboxylase carboxyltransferase subunit alpha</shortName>
        <ecNumber evidence="1">2.1.3.15</ecNumber>
    </recommendedName>
</protein>
<name>ACCA_COXB1</name>